<dbReference type="EMBL" id="CP000668">
    <property type="protein sequence ID" value="ABP40539.1"/>
    <property type="molecule type" value="Genomic_DNA"/>
</dbReference>
<dbReference type="RefSeq" id="WP_002208553.1">
    <property type="nucleotide sequence ID" value="NZ_CP009715.1"/>
</dbReference>
<dbReference type="KEGG" id="ypp:YPDSF_2162"/>
<dbReference type="PATRIC" id="fig|386656.14.peg.3641"/>
<dbReference type="GO" id="GO:0005886">
    <property type="term" value="C:plasma membrane"/>
    <property type="evidence" value="ECO:0007669"/>
    <property type="project" value="UniProtKB-SubCell"/>
</dbReference>
<dbReference type="HAMAP" id="MF_01874">
    <property type="entry name" value="UPF0756"/>
    <property type="match status" value="1"/>
</dbReference>
<dbReference type="InterPro" id="IPR007382">
    <property type="entry name" value="UPF0756_TM"/>
</dbReference>
<dbReference type="PANTHER" id="PTHR38452">
    <property type="entry name" value="UPF0756 MEMBRANE PROTEIN YEAL"/>
    <property type="match status" value="1"/>
</dbReference>
<dbReference type="PANTHER" id="PTHR38452:SF1">
    <property type="entry name" value="UPF0756 MEMBRANE PROTEIN YEAL"/>
    <property type="match status" value="1"/>
</dbReference>
<dbReference type="Pfam" id="PF04284">
    <property type="entry name" value="DUF441"/>
    <property type="match status" value="1"/>
</dbReference>
<reference key="1">
    <citation type="submission" date="2007-02" db="EMBL/GenBank/DDBJ databases">
        <title>Complete sequence of chromosome of Yersinia pestis Pestoides F.</title>
        <authorList>
            <consortium name="US DOE Joint Genome Institute"/>
            <person name="Copeland A."/>
            <person name="Lucas S."/>
            <person name="Lapidus A."/>
            <person name="Barry K."/>
            <person name="Detter J.C."/>
            <person name="Glavina del Rio T."/>
            <person name="Hammon N."/>
            <person name="Israni S."/>
            <person name="Dalin E."/>
            <person name="Tice H."/>
            <person name="Pitluck S."/>
            <person name="Di Bartolo G."/>
            <person name="Chain P."/>
            <person name="Malfatti S."/>
            <person name="Shin M."/>
            <person name="Vergez L."/>
            <person name="Schmutz J."/>
            <person name="Larimer F."/>
            <person name="Land M."/>
            <person name="Hauser L."/>
            <person name="Worsham P."/>
            <person name="Chu M."/>
            <person name="Bearden S."/>
            <person name="Garcia E."/>
            <person name="Richardson P."/>
        </authorList>
    </citation>
    <scope>NUCLEOTIDE SEQUENCE [LARGE SCALE GENOMIC DNA]</scope>
    <source>
        <strain>Pestoides F</strain>
    </source>
</reference>
<organism>
    <name type="scientific">Yersinia pestis (strain Pestoides F)</name>
    <dbReference type="NCBI Taxonomy" id="386656"/>
    <lineage>
        <taxon>Bacteria</taxon>
        <taxon>Pseudomonadati</taxon>
        <taxon>Pseudomonadota</taxon>
        <taxon>Gammaproteobacteria</taxon>
        <taxon>Enterobacterales</taxon>
        <taxon>Yersiniaceae</taxon>
        <taxon>Yersinia</taxon>
    </lineage>
</organism>
<name>Y2162_YERPP</name>
<evidence type="ECO:0000255" key="1">
    <source>
        <dbReference type="HAMAP-Rule" id="MF_01874"/>
    </source>
</evidence>
<accession>A4TMM7</accession>
<sequence length="150" mass="15409">MAALDPTLLILLALAALGILSHNMTVTLAILILIAIRITPLNSFFPWVEKYGLTIGVLILTIGVMAPIASGKISASEVLHSFVQWKSILAIVVGVAVSWLGGRGVSLMTHQPSVVAGLLVGTVLGVALFKGVPVGPLIAAGLLSLVIGKS</sequence>
<keyword id="KW-1003">Cell membrane</keyword>
<keyword id="KW-0472">Membrane</keyword>
<keyword id="KW-0812">Transmembrane</keyword>
<keyword id="KW-1133">Transmembrane helix</keyword>
<proteinExistence type="inferred from homology"/>
<protein>
    <recommendedName>
        <fullName evidence="1">UPF0756 membrane protein YPDSF_2162</fullName>
    </recommendedName>
</protein>
<feature type="chain" id="PRO_5000236858" description="UPF0756 membrane protein YPDSF_2162">
    <location>
        <begin position="1"/>
        <end position="150"/>
    </location>
</feature>
<feature type="transmembrane region" description="Helical" evidence="1">
    <location>
        <begin position="16"/>
        <end position="36"/>
    </location>
</feature>
<feature type="transmembrane region" description="Helical" evidence="1">
    <location>
        <begin position="51"/>
        <end position="71"/>
    </location>
</feature>
<feature type="transmembrane region" description="Helical" evidence="1">
    <location>
        <begin position="88"/>
        <end position="108"/>
    </location>
</feature>
<feature type="transmembrane region" description="Helical" evidence="1">
    <location>
        <begin position="114"/>
        <end position="134"/>
    </location>
</feature>
<gene>
    <name type="ordered locus">YPDSF_2162</name>
</gene>
<comment type="subcellular location">
    <subcellularLocation>
        <location evidence="1">Cell membrane</location>
        <topology evidence="1">Multi-pass membrane protein</topology>
    </subcellularLocation>
</comment>
<comment type="similarity">
    <text evidence="1">Belongs to the UPF0756 family.</text>
</comment>